<evidence type="ECO:0000255" key="1"/>
<evidence type="ECO:0000305" key="2"/>
<proteinExistence type="evidence at protein level"/>
<gene>
    <name type="primary">vacA</name>
    <name type="synonym">vacA1</name>
    <name type="ORF">DDB_G0289485</name>
</gene>
<name>VACA_DICDI</name>
<comment type="subcellular location">
    <subcellularLocation>
        <location>Endosome membrane</location>
        <topology>Peripheral membrane protein</topology>
    </subcellularLocation>
    <subcellularLocation>
        <location>Lysosome</location>
    </subcellularLocation>
    <text>Post-lysosome.</text>
</comment>
<comment type="developmental stage">
    <text>Expressed during all developmental stages.</text>
</comment>
<comment type="similarity">
    <text evidence="2">Belongs to the vacuolin family.</text>
</comment>
<organism>
    <name type="scientific">Dictyostelium discoideum</name>
    <name type="common">Social amoeba</name>
    <dbReference type="NCBI Taxonomy" id="44689"/>
    <lineage>
        <taxon>Eukaryota</taxon>
        <taxon>Amoebozoa</taxon>
        <taxon>Evosea</taxon>
        <taxon>Eumycetozoa</taxon>
        <taxon>Dictyostelia</taxon>
        <taxon>Dictyosteliales</taxon>
        <taxon>Dictyosteliaceae</taxon>
        <taxon>Dictyostelium</taxon>
    </lineage>
</organism>
<feature type="chain" id="PRO_0000328355" description="Vacuolin-A">
    <location>
        <begin position="1"/>
        <end position="598"/>
    </location>
</feature>
<feature type="coiled-coil region" evidence="1">
    <location>
        <begin position="482"/>
        <end position="539"/>
    </location>
</feature>
<keyword id="KW-0175">Coiled coil</keyword>
<keyword id="KW-0967">Endosome</keyword>
<keyword id="KW-0458">Lysosome</keyword>
<keyword id="KW-0472">Membrane</keyword>
<keyword id="KW-1185">Reference proteome</keyword>
<protein>
    <recommendedName>
        <fullName>Vacuolin-A</fullName>
    </recommendedName>
</protein>
<dbReference type="EMBL" id="AF014049">
    <property type="protein sequence ID" value="AAC47709.1"/>
    <property type="molecule type" value="mRNA"/>
</dbReference>
<dbReference type="EMBL" id="AAFI02000141">
    <property type="protein sequence ID" value="EAL62674.1"/>
    <property type="molecule type" value="Genomic_DNA"/>
</dbReference>
<dbReference type="RefSeq" id="XP_636194.1">
    <property type="nucleotide sequence ID" value="XM_631102.1"/>
</dbReference>
<dbReference type="FunCoup" id="O15706">
    <property type="interactions" value="4"/>
</dbReference>
<dbReference type="STRING" id="44689.O15706"/>
<dbReference type="PaxDb" id="44689-DDB0191505"/>
<dbReference type="ABCD" id="O15706">
    <property type="antibodies" value="5 sequenced antibodies"/>
</dbReference>
<dbReference type="EnsemblProtists" id="EAL62674">
    <property type="protein sequence ID" value="EAL62674"/>
    <property type="gene ID" value="DDB_G0289485"/>
</dbReference>
<dbReference type="GeneID" id="8627181"/>
<dbReference type="KEGG" id="ddi:DDB_G0289485"/>
<dbReference type="dictyBase" id="DDB_G0289485">
    <property type="gene designation" value="vacA"/>
</dbReference>
<dbReference type="VEuPathDB" id="AmoebaDB:DDB_G0289485"/>
<dbReference type="eggNOG" id="ENOG502S9G3">
    <property type="taxonomic scope" value="Eukaryota"/>
</dbReference>
<dbReference type="HOGENOM" id="CLU_461128_0_0_1"/>
<dbReference type="InParanoid" id="O15706"/>
<dbReference type="OMA" id="GKNSAFT"/>
<dbReference type="PhylomeDB" id="O15706"/>
<dbReference type="PRO" id="PR:O15706"/>
<dbReference type="Proteomes" id="UP000002195">
    <property type="component" value="Chromosome 5"/>
</dbReference>
<dbReference type="GO" id="GO:0032009">
    <property type="term" value="C:early phagosome"/>
    <property type="evidence" value="ECO:0000314"/>
    <property type="project" value="dictyBase"/>
</dbReference>
<dbReference type="GO" id="GO:0010008">
    <property type="term" value="C:endosome membrane"/>
    <property type="evidence" value="ECO:0007669"/>
    <property type="project" value="UniProtKB-SubCell"/>
</dbReference>
<dbReference type="GO" id="GO:0005770">
    <property type="term" value="C:late endosome"/>
    <property type="evidence" value="ECO:0000314"/>
    <property type="project" value="dictyBase"/>
</dbReference>
<dbReference type="GO" id="GO:0016020">
    <property type="term" value="C:membrane"/>
    <property type="evidence" value="ECO:0000314"/>
    <property type="project" value="dictyBase"/>
</dbReference>
<dbReference type="GO" id="GO:0140220">
    <property type="term" value="C:pathogen-containing vacuole"/>
    <property type="evidence" value="ECO:0000314"/>
    <property type="project" value="dictyBase"/>
</dbReference>
<dbReference type="GO" id="GO:0045335">
    <property type="term" value="C:phagocytic vesicle"/>
    <property type="evidence" value="ECO:0007005"/>
    <property type="project" value="dictyBase"/>
</dbReference>
<dbReference type="GO" id="GO:0032010">
    <property type="term" value="C:phagolysosome"/>
    <property type="evidence" value="ECO:0000314"/>
    <property type="project" value="dictyBase"/>
</dbReference>
<dbReference type="GO" id="GO:0005773">
    <property type="term" value="C:vacuole"/>
    <property type="evidence" value="ECO:0000314"/>
    <property type="project" value="dictyBase"/>
</dbReference>
<dbReference type="GO" id="GO:0061951">
    <property type="term" value="P:establishment of protein localization to plasma membrane"/>
    <property type="evidence" value="ECO:0000316"/>
    <property type="project" value="dictyBase"/>
</dbReference>
<dbReference type="GO" id="GO:0006910">
    <property type="term" value="P:phagocytosis, recognition"/>
    <property type="evidence" value="ECO:0000316"/>
    <property type="project" value="dictyBase"/>
</dbReference>
<dbReference type="GO" id="GO:0090382">
    <property type="term" value="P:phagosome maturation"/>
    <property type="evidence" value="ECO:0000316"/>
    <property type="project" value="dictyBase"/>
</dbReference>
<dbReference type="GO" id="GO:0006355">
    <property type="term" value="P:regulation of DNA-templated transcription"/>
    <property type="evidence" value="ECO:0000316"/>
    <property type="project" value="dictyBase"/>
</dbReference>
<dbReference type="GO" id="GO:0009617">
    <property type="term" value="P:response to bacterium"/>
    <property type="evidence" value="ECO:0007007"/>
    <property type="project" value="dictyBase"/>
</dbReference>
<dbReference type="CDD" id="cd02106">
    <property type="entry name" value="SPFH_like"/>
    <property type="match status" value="1"/>
</dbReference>
<dbReference type="FunFam" id="3.30.479.30:FF:000028">
    <property type="entry name" value="Vacuolin-A"/>
    <property type="match status" value="1"/>
</dbReference>
<dbReference type="Gene3D" id="3.30.479.30">
    <property type="entry name" value="Band 7 domain"/>
    <property type="match status" value="1"/>
</dbReference>
<dbReference type="InterPro" id="IPR001107">
    <property type="entry name" value="Band_7"/>
</dbReference>
<dbReference type="InterPro" id="IPR036013">
    <property type="entry name" value="Band_7/SPFH_dom_sf"/>
</dbReference>
<dbReference type="Pfam" id="PF01145">
    <property type="entry name" value="Band_7"/>
    <property type="match status" value="1"/>
</dbReference>
<dbReference type="SUPFAM" id="SSF117892">
    <property type="entry name" value="Band 7/SPFH domain"/>
    <property type="match status" value="1"/>
</dbReference>
<reference key="1">
    <citation type="journal article" date="1997" name="Curr. Biol.">
        <title>Coronin and vacuolin identify consecutive stages of a late, actin-coated endocytic compartment in Dictyostelium.</title>
        <authorList>
            <person name="Rauchenberger R."/>
            <person name="Hacker U."/>
            <person name="Murphy J."/>
            <person name="Niewohner J."/>
            <person name="Maniak M."/>
        </authorList>
    </citation>
    <scope>NUCLEOTIDE SEQUENCE [MRNA]</scope>
    <scope>FUNCTION</scope>
    <scope>SUBCELLULAR LOCATION</scope>
    <source>
        <strain>AX2</strain>
    </source>
</reference>
<reference key="2">
    <citation type="journal article" date="2005" name="Nature">
        <title>The genome of the social amoeba Dictyostelium discoideum.</title>
        <authorList>
            <person name="Eichinger L."/>
            <person name="Pachebat J.A."/>
            <person name="Gloeckner G."/>
            <person name="Rajandream M.A."/>
            <person name="Sucgang R."/>
            <person name="Berriman M."/>
            <person name="Song J."/>
            <person name="Olsen R."/>
            <person name="Szafranski K."/>
            <person name="Xu Q."/>
            <person name="Tunggal B."/>
            <person name="Kummerfeld S."/>
            <person name="Madera M."/>
            <person name="Konfortov B.A."/>
            <person name="Rivero F."/>
            <person name="Bankier A.T."/>
            <person name="Lehmann R."/>
            <person name="Hamlin N."/>
            <person name="Davies R."/>
            <person name="Gaudet P."/>
            <person name="Fey P."/>
            <person name="Pilcher K."/>
            <person name="Chen G."/>
            <person name="Saunders D."/>
            <person name="Sodergren E.J."/>
            <person name="Davis P."/>
            <person name="Kerhornou A."/>
            <person name="Nie X."/>
            <person name="Hall N."/>
            <person name="Anjard C."/>
            <person name="Hemphill L."/>
            <person name="Bason N."/>
            <person name="Farbrother P."/>
            <person name="Desany B."/>
            <person name="Just E."/>
            <person name="Morio T."/>
            <person name="Rost R."/>
            <person name="Churcher C.M."/>
            <person name="Cooper J."/>
            <person name="Haydock S."/>
            <person name="van Driessche N."/>
            <person name="Cronin A."/>
            <person name="Goodhead I."/>
            <person name="Muzny D.M."/>
            <person name="Mourier T."/>
            <person name="Pain A."/>
            <person name="Lu M."/>
            <person name="Harper D."/>
            <person name="Lindsay R."/>
            <person name="Hauser H."/>
            <person name="James K.D."/>
            <person name="Quiles M."/>
            <person name="Madan Babu M."/>
            <person name="Saito T."/>
            <person name="Buchrieser C."/>
            <person name="Wardroper A."/>
            <person name="Felder M."/>
            <person name="Thangavelu M."/>
            <person name="Johnson D."/>
            <person name="Knights A."/>
            <person name="Loulseged H."/>
            <person name="Mungall K.L."/>
            <person name="Oliver K."/>
            <person name="Price C."/>
            <person name="Quail M.A."/>
            <person name="Urushihara H."/>
            <person name="Hernandez J."/>
            <person name="Rabbinowitsch E."/>
            <person name="Steffen D."/>
            <person name="Sanders M."/>
            <person name="Ma J."/>
            <person name="Kohara Y."/>
            <person name="Sharp S."/>
            <person name="Simmonds M.N."/>
            <person name="Spiegler S."/>
            <person name="Tivey A."/>
            <person name="Sugano S."/>
            <person name="White B."/>
            <person name="Walker D."/>
            <person name="Woodward J.R."/>
            <person name="Winckler T."/>
            <person name="Tanaka Y."/>
            <person name="Shaulsky G."/>
            <person name="Schleicher M."/>
            <person name="Weinstock G.M."/>
            <person name="Rosenthal A."/>
            <person name="Cox E.C."/>
            <person name="Chisholm R.L."/>
            <person name="Gibbs R.A."/>
            <person name="Loomis W.F."/>
            <person name="Platzer M."/>
            <person name="Kay R.R."/>
            <person name="Williams J.G."/>
            <person name="Dear P.H."/>
            <person name="Noegel A.A."/>
            <person name="Barrell B.G."/>
            <person name="Kuspa A."/>
        </authorList>
    </citation>
    <scope>NUCLEOTIDE SEQUENCE [LARGE SCALE GENOMIC DNA]</scope>
    <source>
        <strain>AX4</strain>
    </source>
</reference>
<reference key="3">
    <citation type="journal article" date="1998" name="J. Cell Sci.">
        <title>Targeted gene disruption reveals a role for vacuolin B in the late endocytic pathway and exocytosis.</title>
        <authorList>
            <person name="Jenne N."/>
            <person name="Rauchenberger R."/>
            <person name="Hacker U."/>
            <person name="Kast T."/>
            <person name="Maniak M."/>
        </authorList>
    </citation>
    <scope>FUNCTION</scope>
    <scope>SUBCELLULAR LOCATION</scope>
</reference>
<reference key="4">
    <citation type="journal article" date="2006" name="Eur. J. Cell Biol.">
        <title>Vacuolin, a flotillin/reggie-related protein from Dictyostelium oligomerizes for endosome association.</title>
        <authorList>
            <person name="Wienke D."/>
            <person name="Drengk A."/>
            <person name="Schmauch C."/>
            <person name="Jenne N."/>
            <person name="Maniak M."/>
        </authorList>
    </citation>
    <scope>DOMAIN</scope>
    <scope>SUBCELLULAR LOCATION</scope>
</reference>
<reference key="5">
    <citation type="journal article" date="2006" name="Mol. Cell. Proteomics">
        <title>Proteomics fingerprinting of phagosome maturation and evidence for the role of a Galpha during uptake.</title>
        <authorList>
            <person name="Gotthardt D."/>
            <person name="Blancheteau V."/>
            <person name="Bosserhoff A."/>
            <person name="Ruppert T."/>
            <person name="Delorenzi M."/>
            <person name="Soldati T."/>
        </authorList>
    </citation>
    <scope>IDENTIFICATION BY MASS SPECTROMETRY [LARGE SCALE ANALYSIS]</scope>
    <source>
        <strain>AX2</strain>
    </source>
</reference>
<sequence length="598" mass="66288">MIEGSGSKTPKRNSDEISVKSLSIHEANTLSSEHEHESGNEELTLSQIVIRSDFANESSERQSKIILDRFNQGIGKNSAFTDSPALGRGLSRVDVSYFVMGHRNQVAELYDPRGQRFSTVLTPDPTVNIKYVGPVSKTAHYFGAYGKHVLNVPAGHYAKAFSKNRPVLYGEGPHVIIDPTFQFDENNGFVNQQEPFIEHSTINILRIPAGKIAKVWIGTQPHILESRRDPYVFVDAQFKLVSPDGAKKAQLFESSSCTFVEHGSIKRIIPHTGEVAITYNNGILTIIPTPKDGKPVIIDSPTHNFEGFISTSLQTCLFPSKETKQQALADNKSALADEINLKIFQTRDSLRVGVVLVVAFKIVDPELAITKLGKEGIINHIENVSFADMGKAIQLSTLQEIMYFNSIKPGQATNDDSVQTIQDRVKSHLARDLFDYGVELSRLQIETMKVLDTEIAKKLAGQSVTSAEFTTKQATLVKEYDIKTTEARLKAETDNIALEQRNKAIISESQAKLSSAQREAESLLITAEAQKKASELQGELYTKYPILAEIELARIKAEALKNATLYITPQDAGAFMNSPLVYFDKMMNANNTIQQKKN</sequence>
<accession>O15706</accession>
<accession>Q54HE4</accession>